<proteinExistence type="inferred from homology"/>
<organism>
    <name type="scientific">Thermoplasma volcanium (strain ATCC 51530 / DSM 4299 / JCM 9571 / NBRC 15438 / GSS1)</name>
    <dbReference type="NCBI Taxonomy" id="273116"/>
    <lineage>
        <taxon>Archaea</taxon>
        <taxon>Methanobacteriati</taxon>
        <taxon>Thermoplasmatota</taxon>
        <taxon>Thermoplasmata</taxon>
        <taxon>Thermoplasmatales</taxon>
        <taxon>Thermoplasmataceae</taxon>
        <taxon>Thermoplasma</taxon>
    </lineage>
</organism>
<comment type="similarity">
    <text evidence="1">Belongs to the UPF0145 family.</text>
</comment>
<name>Y671_THEVO</name>
<accession>Q97AY8</accession>
<protein>
    <recommendedName>
        <fullName evidence="1">UPF0145 protein TV0671</fullName>
    </recommendedName>
</protein>
<reference key="1">
    <citation type="journal article" date="2000" name="Proc. Natl. Acad. Sci. U.S.A.">
        <title>Archaeal adaptation to higher temperatures revealed by genomic sequence of Thermoplasma volcanium.</title>
        <authorList>
            <person name="Kawashima T."/>
            <person name="Amano N."/>
            <person name="Koike H."/>
            <person name="Makino S."/>
            <person name="Higuchi S."/>
            <person name="Kawashima-Ohya Y."/>
            <person name="Watanabe K."/>
            <person name="Yamazaki M."/>
            <person name="Kanehori K."/>
            <person name="Kawamoto T."/>
            <person name="Nunoshiba T."/>
            <person name="Yamamoto Y."/>
            <person name="Aramaki H."/>
            <person name="Makino K."/>
            <person name="Suzuki M."/>
        </authorList>
    </citation>
    <scope>NUCLEOTIDE SEQUENCE [LARGE SCALE GENOMIC DNA]</scope>
    <source>
        <strain>ATCC 51530 / DSM 4299 / JCM 9571 / NBRC 15438 / GSS1</strain>
    </source>
</reference>
<dbReference type="EMBL" id="BA000011">
    <property type="protein sequence ID" value="BAB59813.1"/>
    <property type="molecule type" value="Genomic_DNA"/>
</dbReference>
<dbReference type="RefSeq" id="WP_010916931.1">
    <property type="nucleotide sequence ID" value="NC_002689.2"/>
</dbReference>
<dbReference type="SMR" id="Q97AY8"/>
<dbReference type="PaxDb" id="273116-14324887"/>
<dbReference type="GeneID" id="1441779"/>
<dbReference type="KEGG" id="tvo:TVG0668267"/>
<dbReference type="eggNOG" id="arCOG02287">
    <property type="taxonomic scope" value="Archaea"/>
</dbReference>
<dbReference type="HOGENOM" id="CLU_117144_1_1_2"/>
<dbReference type="OrthoDB" id="59443at2157"/>
<dbReference type="PhylomeDB" id="Q97AY8"/>
<dbReference type="Proteomes" id="UP000001017">
    <property type="component" value="Chromosome"/>
</dbReference>
<dbReference type="Gene3D" id="3.30.110.70">
    <property type="entry name" value="Hypothetical protein apc22750. Chain B"/>
    <property type="match status" value="1"/>
</dbReference>
<dbReference type="HAMAP" id="MF_00338">
    <property type="entry name" value="UPF0145"/>
    <property type="match status" value="1"/>
</dbReference>
<dbReference type="InterPro" id="IPR035439">
    <property type="entry name" value="UPF0145_dom_sf"/>
</dbReference>
<dbReference type="InterPro" id="IPR002765">
    <property type="entry name" value="UPF0145_YbjQ-like"/>
</dbReference>
<dbReference type="PANTHER" id="PTHR34068:SF2">
    <property type="entry name" value="UPF0145 PROTEIN SCO3412"/>
    <property type="match status" value="1"/>
</dbReference>
<dbReference type="PANTHER" id="PTHR34068">
    <property type="entry name" value="UPF0145 PROTEIN YBJQ"/>
    <property type="match status" value="1"/>
</dbReference>
<dbReference type="Pfam" id="PF01906">
    <property type="entry name" value="YbjQ_1"/>
    <property type="match status" value="1"/>
</dbReference>
<dbReference type="SUPFAM" id="SSF117782">
    <property type="entry name" value="YbjQ-like"/>
    <property type="match status" value="1"/>
</dbReference>
<gene>
    <name type="ordered locus">TV0671</name>
    <name type="ORF">TVG0668267</name>
</gene>
<feature type="chain" id="PRO_0000138506" description="UPF0145 protein TV0671">
    <location>
        <begin position="1"/>
        <end position="122"/>
    </location>
</feature>
<sequence>MDEEHNIIMVTTNYIPGKKITRIIGTIWGITVRSRGLGGNIVAGLRSLAGGEIKEYSKMLSDTRNTAMERLRDAAEQVGANAVIELRFDSSDIGQVMTEIVAYGTAVVVEDVSSDIQRVGLS</sequence>
<evidence type="ECO:0000255" key="1">
    <source>
        <dbReference type="HAMAP-Rule" id="MF_00338"/>
    </source>
</evidence>